<keyword id="KW-0488">Methylation</keyword>
<keyword id="KW-0597">Phosphoprotein</keyword>
<keyword id="KW-1267">Proteomics identification</keyword>
<keyword id="KW-1185">Reference proteome</keyword>
<feature type="chain" id="PRO_0000307747" description="Proline-rich protein 18">
    <location>
        <begin position="1"/>
        <end position="295"/>
    </location>
</feature>
<feature type="region of interest" description="Disordered" evidence="2">
    <location>
        <begin position="1"/>
        <end position="133"/>
    </location>
</feature>
<feature type="region of interest" description="Disordered" evidence="2">
    <location>
        <begin position="181"/>
        <end position="227"/>
    </location>
</feature>
<feature type="compositionally biased region" description="Pro residues" evidence="2">
    <location>
        <begin position="1"/>
        <end position="13"/>
    </location>
</feature>
<feature type="compositionally biased region" description="Low complexity" evidence="2">
    <location>
        <begin position="14"/>
        <end position="29"/>
    </location>
</feature>
<feature type="compositionally biased region" description="Low complexity" evidence="2">
    <location>
        <begin position="103"/>
        <end position="126"/>
    </location>
</feature>
<feature type="compositionally biased region" description="Low complexity" evidence="2">
    <location>
        <begin position="181"/>
        <end position="192"/>
    </location>
</feature>
<feature type="modified residue" description="Phosphoserine" evidence="1">
    <location>
        <position position="47"/>
    </location>
</feature>
<feature type="modified residue" description="Omega-N-methylarginine" evidence="1">
    <location>
        <position position="83"/>
    </location>
</feature>
<feature type="modified residue" description="Asymmetric dimethylarginine" evidence="1">
    <location>
        <position position="172"/>
    </location>
</feature>
<feature type="modified residue" description="Omega-N-methylarginine" evidence="1">
    <location>
        <position position="188"/>
    </location>
</feature>
<feature type="sequence variant" id="VAR_036642" description="In dbSNP:rs7757150." evidence="3">
    <original>C</original>
    <variation>S</variation>
    <location>
        <position position="136"/>
    </location>
</feature>
<gene>
    <name type="primary">PRR18</name>
</gene>
<protein>
    <recommendedName>
        <fullName>Proline-rich protein 18</fullName>
    </recommendedName>
</protein>
<accession>Q8N4B5</accession>
<name>PRR18_HUMAN</name>
<dbReference type="EMBL" id="AL121956">
    <property type="status" value="NOT_ANNOTATED_CDS"/>
    <property type="molecule type" value="Genomic_DNA"/>
</dbReference>
<dbReference type="EMBL" id="BC034775">
    <property type="protein sequence ID" value="AAH34775.1"/>
    <property type="molecule type" value="mRNA"/>
</dbReference>
<dbReference type="CCDS" id="CCDS5291.1"/>
<dbReference type="RefSeq" id="NP_787118.2">
    <property type="nucleotide sequence ID" value="NM_175922.4"/>
</dbReference>
<dbReference type="FunCoup" id="Q8N4B5">
    <property type="interactions" value="1"/>
</dbReference>
<dbReference type="STRING" id="9606.ENSP00000319590"/>
<dbReference type="GlyGen" id="Q8N4B5">
    <property type="glycosylation" value="1 site, 1 O-linked glycan (1 site)"/>
</dbReference>
<dbReference type="iPTMnet" id="Q8N4B5"/>
<dbReference type="PhosphoSitePlus" id="Q8N4B5"/>
<dbReference type="BioMuta" id="PRR18"/>
<dbReference type="DMDM" id="296452871"/>
<dbReference type="MassIVE" id="Q8N4B5"/>
<dbReference type="PaxDb" id="9606-ENSP00000319590"/>
<dbReference type="PeptideAtlas" id="Q8N4B5"/>
<dbReference type="ProteomicsDB" id="71905"/>
<dbReference type="Antibodypedia" id="46754">
    <property type="antibodies" value="93 antibodies from 15 providers"/>
</dbReference>
<dbReference type="DNASU" id="285800"/>
<dbReference type="Ensembl" id="ENST00000322583.5">
    <property type="protein sequence ID" value="ENSP00000319590.3"/>
    <property type="gene ID" value="ENSG00000176381.6"/>
</dbReference>
<dbReference type="GeneID" id="285800"/>
<dbReference type="KEGG" id="hsa:285800"/>
<dbReference type="MANE-Select" id="ENST00000322583.5">
    <property type="protein sequence ID" value="ENSP00000319590.3"/>
    <property type="RefSeq nucleotide sequence ID" value="NM_175922.4"/>
    <property type="RefSeq protein sequence ID" value="NP_787118.2"/>
</dbReference>
<dbReference type="UCSC" id="uc003quw.2">
    <property type="organism name" value="human"/>
</dbReference>
<dbReference type="AGR" id="HGNC:28574"/>
<dbReference type="CTD" id="285800"/>
<dbReference type="GeneCards" id="PRR18"/>
<dbReference type="HGNC" id="HGNC:28574">
    <property type="gene designation" value="PRR18"/>
</dbReference>
<dbReference type="HPA" id="ENSG00000176381">
    <property type="expression patterns" value="Tissue enriched (brain)"/>
</dbReference>
<dbReference type="neXtProt" id="NX_Q8N4B5"/>
<dbReference type="OpenTargets" id="ENSG00000176381"/>
<dbReference type="PharmGKB" id="PA162400157"/>
<dbReference type="VEuPathDB" id="HostDB:ENSG00000176381"/>
<dbReference type="eggNOG" id="ENOG502RXBM">
    <property type="taxonomic scope" value="Eukaryota"/>
</dbReference>
<dbReference type="GeneTree" id="ENSGT00390000002164"/>
<dbReference type="HOGENOM" id="CLU_906020_0_0_1"/>
<dbReference type="InParanoid" id="Q8N4B5"/>
<dbReference type="OMA" id="HLPRRPC"/>
<dbReference type="OrthoDB" id="17396at9604"/>
<dbReference type="PAN-GO" id="Q8N4B5">
    <property type="GO annotations" value="0 GO annotations based on evolutionary models"/>
</dbReference>
<dbReference type="PhylomeDB" id="Q8N4B5"/>
<dbReference type="TreeFam" id="TF337179"/>
<dbReference type="PathwayCommons" id="Q8N4B5"/>
<dbReference type="SignaLink" id="Q8N4B5"/>
<dbReference type="BioGRID-ORCS" id="285800">
    <property type="hits" value="11 hits in 1136 CRISPR screens"/>
</dbReference>
<dbReference type="GenomeRNAi" id="285800"/>
<dbReference type="Pharos" id="Q8N4B5">
    <property type="development level" value="Tdark"/>
</dbReference>
<dbReference type="PRO" id="PR:Q8N4B5"/>
<dbReference type="Proteomes" id="UP000005640">
    <property type="component" value="Chromosome 6"/>
</dbReference>
<dbReference type="RNAct" id="Q8N4B5">
    <property type="molecule type" value="protein"/>
</dbReference>
<dbReference type="Bgee" id="ENSG00000176381">
    <property type="expression patterns" value="Expressed in endothelial cell and 85 other cell types or tissues"/>
</dbReference>
<dbReference type="ExpressionAtlas" id="Q8N4B5">
    <property type="expression patterns" value="baseline and differential"/>
</dbReference>
<dbReference type="InterPro" id="IPR031369">
    <property type="entry name" value="PRR18"/>
</dbReference>
<dbReference type="Pfam" id="PF15671">
    <property type="entry name" value="PRR18"/>
    <property type="match status" value="1"/>
</dbReference>
<evidence type="ECO:0000250" key="1">
    <source>
        <dbReference type="UniProtKB" id="Q6PAN7"/>
    </source>
</evidence>
<evidence type="ECO:0000256" key="2">
    <source>
        <dbReference type="SAM" id="MobiDB-lite"/>
    </source>
</evidence>
<evidence type="ECO:0000269" key="3">
    <source>
    </source>
</evidence>
<organism>
    <name type="scientific">Homo sapiens</name>
    <name type="common">Human</name>
    <dbReference type="NCBI Taxonomy" id="9606"/>
    <lineage>
        <taxon>Eukaryota</taxon>
        <taxon>Metazoa</taxon>
        <taxon>Chordata</taxon>
        <taxon>Craniata</taxon>
        <taxon>Vertebrata</taxon>
        <taxon>Euteleostomi</taxon>
        <taxon>Mammalia</taxon>
        <taxon>Eutheria</taxon>
        <taxon>Euarchontoglires</taxon>
        <taxon>Primates</taxon>
        <taxon>Haplorrhini</taxon>
        <taxon>Catarrhini</taxon>
        <taxon>Hominidae</taxon>
        <taxon>Homo</taxon>
    </lineage>
</organism>
<sequence>MPFPPMPPPPAPAPGAQAARQLPRRPCAAGDKKKRPPQRPEGLLSSSWPSATLKRPPARRGPGLDRTQPPAPPGVSPQALPSRARAPATCAPPRPAGSGHSPARTTYAATSAGTGTTAAGTSSGAGPCPDSAARFCLNLTPEAVLVIQKRHLEKQLLARPRRPFPSPSAEPRRLLAPCLPARAAGPRRGGPASDPDAPPTAGQGRRAPPPGAQLLHGGLQVPQLSPRPGALRPMLKVSLLNERHRYDDVEYEEEPEAVDEGLVRKCTEWLRGVESAAAARGRAGALDSRRHLSTL</sequence>
<proteinExistence type="evidence at protein level"/>
<reference key="1">
    <citation type="journal article" date="2003" name="Nature">
        <title>The DNA sequence and analysis of human chromosome 6.</title>
        <authorList>
            <person name="Mungall A.J."/>
            <person name="Palmer S.A."/>
            <person name="Sims S.K."/>
            <person name="Edwards C.A."/>
            <person name="Ashurst J.L."/>
            <person name="Wilming L."/>
            <person name="Jones M.C."/>
            <person name="Horton R."/>
            <person name="Hunt S.E."/>
            <person name="Scott C.E."/>
            <person name="Gilbert J.G.R."/>
            <person name="Clamp M.E."/>
            <person name="Bethel G."/>
            <person name="Milne S."/>
            <person name="Ainscough R."/>
            <person name="Almeida J.P."/>
            <person name="Ambrose K.D."/>
            <person name="Andrews T.D."/>
            <person name="Ashwell R.I.S."/>
            <person name="Babbage A.K."/>
            <person name="Bagguley C.L."/>
            <person name="Bailey J."/>
            <person name="Banerjee R."/>
            <person name="Barker D.J."/>
            <person name="Barlow K.F."/>
            <person name="Bates K."/>
            <person name="Beare D.M."/>
            <person name="Beasley H."/>
            <person name="Beasley O."/>
            <person name="Bird C.P."/>
            <person name="Blakey S.E."/>
            <person name="Bray-Allen S."/>
            <person name="Brook J."/>
            <person name="Brown A.J."/>
            <person name="Brown J.Y."/>
            <person name="Burford D.C."/>
            <person name="Burrill W."/>
            <person name="Burton J."/>
            <person name="Carder C."/>
            <person name="Carter N.P."/>
            <person name="Chapman J.C."/>
            <person name="Clark S.Y."/>
            <person name="Clark G."/>
            <person name="Clee C.M."/>
            <person name="Clegg S."/>
            <person name="Cobley V."/>
            <person name="Collier R.E."/>
            <person name="Collins J.E."/>
            <person name="Colman L.K."/>
            <person name="Corby N.R."/>
            <person name="Coville G.J."/>
            <person name="Culley K.M."/>
            <person name="Dhami P."/>
            <person name="Davies J."/>
            <person name="Dunn M."/>
            <person name="Earthrowl M.E."/>
            <person name="Ellington A.E."/>
            <person name="Evans K.A."/>
            <person name="Faulkner L."/>
            <person name="Francis M.D."/>
            <person name="Frankish A."/>
            <person name="Frankland J."/>
            <person name="French L."/>
            <person name="Garner P."/>
            <person name="Garnett J."/>
            <person name="Ghori M.J."/>
            <person name="Gilby L.M."/>
            <person name="Gillson C.J."/>
            <person name="Glithero R.J."/>
            <person name="Grafham D.V."/>
            <person name="Grant M."/>
            <person name="Gribble S."/>
            <person name="Griffiths C."/>
            <person name="Griffiths M.N.D."/>
            <person name="Hall R."/>
            <person name="Halls K.S."/>
            <person name="Hammond S."/>
            <person name="Harley J.L."/>
            <person name="Hart E.A."/>
            <person name="Heath P.D."/>
            <person name="Heathcott R."/>
            <person name="Holmes S.J."/>
            <person name="Howden P.J."/>
            <person name="Howe K.L."/>
            <person name="Howell G.R."/>
            <person name="Huckle E."/>
            <person name="Humphray S.J."/>
            <person name="Humphries M.D."/>
            <person name="Hunt A.R."/>
            <person name="Johnson C.M."/>
            <person name="Joy A.A."/>
            <person name="Kay M."/>
            <person name="Keenan S.J."/>
            <person name="Kimberley A.M."/>
            <person name="King A."/>
            <person name="Laird G.K."/>
            <person name="Langford C."/>
            <person name="Lawlor S."/>
            <person name="Leongamornlert D.A."/>
            <person name="Leversha M."/>
            <person name="Lloyd C.R."/>
            <person name="Lloyd D.M."/>
            <person name="Loveland J.E."/>
            <person name="Lovell J."/>
            <person name="Martin S."/>
            <person name="Mashreghi-Mohammadi M."/>
            <person name="Maslen G.L."/>
            <person name="Matthews L."/>
            <person name="McCann O.T."/>
            <person name="McLaren S.J."/>
            <person name="McLay K."/>
            <person name="McMurray A."/>
            <person name="Moore M.J.F."/>
            <person name="Mullikin J.C."/>
            <person name="Niblett D."/>
            <person name="Nickerson T."/>
            <person name="Novik K.L."/>
            <person name="Oliver K."/>
            <person name="Overton-Larty E.K."/>
            <person name="Parker A."/>
            <person name="Patel R."/>
            <person name="Pearce A.V."/>
            <person name="Peck A.I."/>
            <person name="Phillimore B.J.C.T."/>
            <person name="Phillips S."/>
            <person name="Plumb R.W."/>
            <person name="Porter K.M."/>
            <person name="Ramsey Y."/>
            <person name="Ranby S.A."/>
            <person name="Rice C.M."/>
            <person name="Ross M.T."/>
            <person name="Searle S.M."/>
            <person name="Sehra H.K."/>
            <person name="Sheridan E."/>
            <person name="Skuce C.D."/>
            <person name="Smith S."/>
            <person name="Smith M."/>
            <person name="Spraggon L."/>
            <person name="Squares S.L."/>
            <person name="Steward C.A."/>
            <person name="Sycamore N."/>
            <person name="Tamlyn-Hall G."/>
            <person name="Tester J."/>
            <person name="Theaker A.J."/>
            <person name="Thomas D.W."/>
            <person name="Thorpe A."/>
            <person name="Tracey A."/>
            <person name="Tromans A."/>
            <person name="Tubby B."/>
            <person name="Wall M."/>
            <person name="Wallis J.M."/>
            <person name="West A.P."/>
            <person name="White S.S."/>
            <person name="Whitehead S.L."/>
            <person name="Whittaker H."/>
            <person name="Wild A."/>
            <person name="Willey D.J."/>
            <person name="Wilmer T.E."/>
            <person name="Wood J.M."/>
            <person name="Wray P.W."/>
            <person name="Wyatt J.C."/>
            <person name="Young L."/>
            <person name="Younger R.M."/>
            <person name="Bentley D.R."/>
            <person name="Coulson A."/>
            <person name="Durbin R.M."/>
            <person name="Hubbard T."/>
            <person name="Sulston J.E."/>
            <person name="Dunham I."/>
            <person name="Rogers J."/>
            <person name="Beck S."/>
        </authorList>
    </citation>
    <scope>NUCLEOTIDE SEQUENCE [LARGE SCALE GENOMIC DNA]</scope>
</reference>
<reference key="2">
    <citation type="journal article" date="2004" name="Genome Res.">
        <title>The status, quality, and expansion of the NIH full-length cDNA project: the Mammalian Gene Collection (MGC).</title>
        <authorList>
            <consortium name="The MGC Project Team"/>
        </authorList>
    </citation>
    <scope>NUCLEOTIDE SEQUENCE [LARGE SCALE MRNA]</scope>
    <scope>VARIANT SER-136</scope>
    <source>
        <tissue>Brain</tissue>
    </source>
</reference>